<proteinExistence type="inferred from homology"/>
<accession>P81193</accession>
<keyword id="KW-0217">Developmental protein</keyword>
<keyword id="KW-0238">DNA-binding</keyword>
<keyword id="KW-0371">Homeobox</keyword>
<keyword id="KW-0539">Nucleus</keyword>
<gene>
    <name type="primary">CDX</name>
</gene>
<organism>
    <name type="scientific">Lineus sanguineus</name>
    <name type="common">Ribbon worm</name>
    <dbReference type="NCBI Taxonomy" id="187800"/>
    <lineage>
        <taxon>Eukaryota</taxon>
        <taxon>Metazoa</taxon>
        <taxon>Spiralia</taxon>
        <taxon>Lophotrochozoa</taxon>
        <taxon>Nemertea</taxon>
        <taxon>Pilidiophora</taxon>
        <taxon>Heteronemertea</taxon>
        <taxon>Lineidae</taxon>
        <taxon>Lineus</taxon>
    </lineage>
</organism>
<reference key="1">
    <citation type="journal article" date="1998" name="Proc. Natl. Acad. Sci. U.S.A.">
        <title>Homeobox genes in the ribbonworm Lineus sanguineus: evolutionary implications.</title>
        <authorList>
            <person name="Kmita-Cunisse M."/>
            <person name="Loosli F."/>
            <person name="Bierne J."/>
            <person name="Gehring W.J."/>
        </authorList>
    </citation>
    <scope>NUCLEOTIDE SEQUENCE</scope>
</reference>
<feature type="chain" id="PRO_0000048854" description="Homeobox protein CDX">
    <location>
        <begin position="1" status="less than"/>
        <end position="70"/>
    </location>
</feature>
<feature type="DNA-binding region" description="Homeobox" evidence="1">
    <location>
        <begin position="1"/>
        <end position="60"/>
    </location>
</feature>
<feature type="non-terminal residue">
    <location>
        <position position="1"/>
    </location>
</feature>
<evidence type="ECO:0000255" key="1">
    <source>
        <dbReference type="PROSITE-ProRule" id="PRU00108"/>
    </source>
</evidence>
<evidence type="ECO:0000305" key="2"/>
<name>CDX_LINSA</name>
<protein>
    <recommendedName>
        <fullName>Homeobox protein CDX</fullName>
    </recommendedName>
    <alternativeName>
        <fullName>Caudal-type homeobox protein</fullName>
    </alternativeName>
    <alternativeName>
        <fullName>LSCDX</fullName>
    </alternativeName>
</protein>
<comment type="subcellular location">
    <subcellularLocation>
        <location evidence="1">Nucleus</location>
    </subcellularLocation>
</comment>
<comment type="similarity">
    <text evidence="2">Belongs to the Caudal homeobox family.</text>
</comment>
<dbReference type="SMR" id="P81193"/>
<dbReference type="GO" id="GO:0005634">
    <property type="term" value="C:nucleus"/>
    <property type="evidence" value="ECO:0007669"/>
    <property type="project" value="UniProtKB-SubCell"/>
</dbReference>
<dbReference type="GO" id="GO:0000981">
    <property type="term" value="F:DNA-binding transcription factor activity, RNA polymerase II-specific"/>
    <property type="evidence" value="ECO:0007669"/>
    <property type="project" value="InterPro"/>
</dbReference>
<dbReference type="GO" id="GO:0000977">
    <property type="term" value="F:RNA polymerase II transcription regulatory region sequence-specific DNA binding"/>
    <property type="evidence" value="ECO:0007669"/>
    <property type="project" value="TreeGrafter"/>
</dbReference>
<dbReference type="GO" id="GO:0009887">
    <property type="term" value="P:animal organ morphogenesis"/>
    <property type="evidence" value="ECO:0007669"/>
    <property type="project" value="TreeGrafter"/>
</dbReference>
<dbReference type="GO" id="GO:0009948">
    <property type="term" value="P:anterior/posterior axis specification"/>
    <property type="evidence" value="ECO:0007669"/>
    <property type="project" value="TreeGrafter"/>
</dbReference>
<dbReference type="GO" id="GO:0030154">
    <property type="term" value="P:cell differentiation"/>
    <property type="evidence" value="ECO:0007669"/>
    <property type="project" value="TreeGrafter"/>
</dbReference>
<dbReference type="CDD" id="cd00086">
    <property type="entry name" value="homeodomain"/>
    <property type="match status" value="1"/>
</dbReference>
<dbReference type="FunFam" id="1.10.10.60:FF:000574">
    <property type="entry name" value="Homeobox protein CHOX-CAD2"/>
    <property type="match status" value="1"/>
</dbReference>
<dbReference type="Gene3D" id="1.10.10.60">
    <property type="entry name" value="Homeodomain-like"/>
    <property type="match status" value="1"/>
</dbReference>
<dbReference type="InterPro" id="IPR047152">
    <property type="entry name" value="Caudal_homeobox"/>
</dbReference>
<dbReference type="InterPro" id="IPR001356">
    <property type="entry name" value="HD"/>
</dbReference>
<dbReference type="InterPro" id="IPR020479">
    <property type="entry name" value="HD_metazoa"/>
</dbReference>
<dbReference type="InterPro" id="IPR017970">
    <property type="entry name" value="Homeobox_CS"/>
</dbReference>
<dbReference type="InterPro" id="IPR009057">
    <property type="entry name" value="Homeodomain-like_sf"/>
</dbReference>
<dbReference type="InterPro" id="IPR000047">
    <property type="entry name" value="HTH_motif"/>
</dbReference>
<dbReference type="PANTHER" id="PTHR24332">
    <property type="entry name" value="HOMEOBOX PROTEIN CDX"/>
    <property type="match status" value="1"/>
</dbReference>
<dbReference type="PANTHER" id="PTHR24332:SF9">
    <property type="entry name" value="HOMEOTIC PROTEIN CAUDAL"/>
    <property type="match status" value="1"/>
</dbReference>
<dbReference type="Pfam" id="PF00046">
    <property type="entry name" value="Homeodomain"/>
    <property type="match status" value="1"/>
</dbReference>
<dbReference type="PRINTS" id="PR00024">
    <property type="entry name" value="HOMEOBOX"/>
</dbReference>
<dbReference type="PRINTS" id="PR00031">
    <property type="entry name" value="HTHREPRESSR"/>
</dbReference>
<dbReference type="SMART" id="SM00389">
    <property type="entry name" value="HOX"/>
    <property type="match status" value="1"/>
</dbReference>
<dbReference type="SUPFAM" id="SSF46689">
    <property type="entry name" value="Homeodomain-like"/>
    <property type="match status" value="1"/>
</dbReference>
<dbReference type="PROSITE" id="PS00027">
    <property type="entry name" value="HOMEOBOX_1"/>
    <property type="match status" value="1"/>
</dbReference>
<dbReference type="PROSITE" id="PS50071">
    <property type="entry name" value="HOMEOBOX_2"/>
    <property type="match status" value="1"/>
</dbReference>
<sequence>PDKYRVVYTDYQRLELEKEFHYSRYITMNRKAELAKSLDLTERQIKIWFQNRRAKERKINKKKDVMVKEP</sequence>